<organism>
    <name type="scientific">Boa constrictor</name>
    <name type="common">Boa</name>
    <dbReference type="NCBI Taxonomy" id="8574"/>
    <lineage>
        <taxon>Eukaryota</taxon>
        <taxon>Metazoa</taxon>
        <taxon>Chordata</taxon>
        <taxon>Craniata</taxon>
        <taxon>Vertebrata</taxon>
        <taxon>Euteleostomi</taxon>
        <taxon>Lepidosauria</taxon>
        <taxon>Squamata</taxon>
        <taxon>Bifurcata</taxon>
        <taxon>Unidentata</taxon>
        <taxon>Episquamata</taxon>
        <taxon>Toxicofera</taxon>
        <taxon>Serpentes</taxon>
        <taxon>Henophidia</taxon>
        <taxon>Boidae</taxon>
        <taxon>Boinae</taxon>
        <taxon>Boa</taxon>
    </lineage>
</organism>
<keyword id="KW-0165">Cleavage on pair of basic residues</keyword>
<keyword id="KW-1015">Disulfide bond</keyword>
<keyword id="KW-0325">Glycoprotein</keyword>
<keyword id="KW-0339">Growth factor</keyword>
<keyword id="KW-0964">Secreted</keyword>
<keyword id="KW-0732">Signal</keyword>
<protein>
    <recommendedName>
        <fullName evidence="3">Neurotrophic factor BDNF precursor form</fullName>
        <shortName>proBDNF</shortName>
    </recommendedName>
    <alternativeName>
        <fullName>Brain-derived neurotrophic factor</fullName>
    </alternativeName>
    <component>
        <recommendedName>
            <fullName>Neurotrophic factor BDNF</fullName>
        </recommendedName>
    </component>
</protein>
<dbReference type="EMBL" id="AY988030">
    <property type="protein sequence ID" value="AAY44237.1"/>
    <property type="molecule type" value="Genomic_DNA"/>
</dbReference>
<dbReference type="SMR" id="Q1X708"/>
<dbReference type="GlyCosmos" id="Q1X708">
    <property type="glycosylation" value="1 site, No reported glycans"/>
</dbReference>
<dbReference type="GO" id="GO:0030424">
    <property type="term" value="C:axon"/>
    <property type="evidence" value="ECO:0007669"/>
    <property type="project" value="TreeGrafter"/>
</dbReference>
<dbReference type="GO" id="GO:0030425">
    <property type="term" value="C:dendrite"/>
    <property type="evidence" value="ECO:0007669"/>
    <property type="project" value="TreeGrafter"/>
</dbReference>
<dbReference type="GO" id="GO:0005615">
    <property type="term" value="C:extracellular space"/>
    <property type="evidence" value="ECO:0007669"/>
    <property type="project" value="TreeGrafter"/>
</dbReference>
<dbReference type="GO" id="GO:0008021">
    <property type="term" value="C:synaptic vesicle"/>
    <property type="evidence" value="ECO:0007669"/>
    <property type="project" value="TreeGrafter"/>
</dbReference>
<dbReference type="GO" id="GO:0008083">
    <property type="term" value="F:growth factor activity"/>
    <property type="evidence" value="ECO:0007669"/>
    <property type="project" value="UniProtKB-KW"/>
</dbReference>
<dbReference type="GO" id="GO:0005163">
    <property type="term" value="F:nerve growth factor receptor binding"/>
    <property type="evidence" value="ECO:0007669"/>
    <property type="project" value="TreeGrafter"/>
</dbReference>
<dbReference type="GO" id="GO:0007169">
    <property type="term" value="P:cell surface receptor protein tyrosine kinase signaling pathway"/>
    <property type="evidence" value="ECO:0007669"/>
    <property type="project" value="TreeGrafter"/>
</dbReference>
<dbReference type="GO" id="GO:0050804">
    <property type="term" value="P:modulation of chemical synaptic transmission"/>
    <property type="evidence" value="ECO:0007669"/>
    <property type="project" value="TreeGrafter"/>
</dbReference>
<dbReference type="GO" id="GO:0043524">
    <property type="term" value="P:negative regulation of neuron apoptotic process"/>
    <property type="evidence" value="ECO:0007669"/>
    <property type="project" value="TreeGrafter"/>
</dbReference>
<dbReference type="GO" id="GO:0021675">
    <property type="term" value="P:nerve development"/>
    <property type="evidence" value="ECO:0007669"/>
    <property type="project" value="TreeGrafter"/>
</dbReference>
<dbReference type="GO" id="GO:0038180">
    <property type="term" value="P:nerve growth factor signaling pathway"/>
    <property type="evidence" value="ECO:0007669"/>
    <property type="project" value="TreeGrafter"/>
</dbReference>
<dbReference type="GO" id="GO:0048812">
    <property type="term" value="P:neuron projection morphogenesis"/>
    <property type="evidence" value="ECO:0007669"/>
    <property type="project" value="TreeGrafter"/>
</dbReference>
<dbReference type="FunFam" id="2.10.90.10:FF:000002">
    <property type="entry name" value="Brain-derived neurotrophic factor"/>
    <property type="match status" value="1"/>
</dbReference>
<dbReference type="Gene3D" id="2.10.90.10">
    <property type="entry name" value="Cystine-knot cytokines"/>
    <property type="match status" value="1"/>
</dbReference>
<dbReference type="InterPro" id="IPR020430">
    <property type="entry name" value="Brain-der_neurotrophic_factor"/>
</dbReference>
<dbReference type="InterPro" id="IPR029034">
    <property type="entry name" value="Cystine-knot_cytokine"/>
</dbReference>
<dbReference type="InterPro" id="IPR020408">
    <property type="entry name" value="Nerve_growth_factor-like"/>
</dbReference>
<dbReference type="InterPro" id="IPR002072">
    <property type="entry name" value="Nerve_growth_factor-rel"/>
</dbReference>
<dbReference type="InterPro" id="IPR019846">
    <property type="entry name" value="Nerve_growth_factor_CS"/>
</dbReference>
<dbReference type="PANTHER" id="PTHR11589:SF3">
    <property type="entry name" value="BRAIN-DERIVED NEUROTROPHIC FACTOR"/>
    <property type="match status" value="1"/>
</dbReference>
<dbReference type="PANTHER" id="PTHR11589">
    <property type="entry name" value="NERVE GROWTH FACTOR NGF -RELATED"/>
    <property type="match status" value="1"/>
</dbReference>
<dbReference type="Pfam" id="PF00243">
    <property type="entry name" value="NGF"/>
    <property type="match status" value="1"/>
</dbReference>
<dbReference type="PIRSF" id="PIRSF001789">
    <property type="entry name" value="NGF"/>
    <property type="match status" value="1"/>
</dbReference>
<dbReference type="PRINTS" id="PR01912">
    <property type="entry name" value="BDNFACTOR"/>
</dbReference>
<dbReference type="PRINTS" id="PR00268">
    <property type="entry name" value="NGF"/>
</dbReference>
<dbReference type="SMART" id="SM00140">
    <property type="entry name" value="NGF"/>
    <property type="match status" value="1"/>
</dbReference>
<dbReference type="SUPFAM" id="SSF57501">
    <property type="entry name" value="Cystine-knot cytokines"/>
    <property type="match status" value="1"/>
</dbReference>
<dbReference type="PROSITE" id="PS00248">
    <property type="entry name" value="NGF_1"/>
    <property type="match status" value="1"/>
</dbReference>
<dbReference type="PROSITE" id="PS50270">
    <property type="entry name" value="NGF_2"/>
    <property type="match status" value="1"/>
</dbReference>
<gene>
    <name type="primary">BDNF</name>
</gene>
<reference key="1">
    <citation type="journal article" date="2006" name="Mol. Phylogenet. Evol.">
        <title>Dispersal and vicariance: the complex evolutionary history of boid snakes.</title>
        <authorList>
            <person name="Noonan B.P."/>
            <person name="Chippindale P.T."/>
        </authorList>
    </citation>
    <scope>NUCLEOTIDE SEQUENCE [GENOMIC DNA]</scope>
</reference>
<evidence type="ECO:0000250" key="1"/>
<evidence type="ECO:0000255" key="2"/>
<evidence type="ECO:0000305" key="3"/>
<proteinExistence type="inferred from homology"/>
<name>BDNF_BOACO</name>
<sequence length="223" mass="25044">SCMKAAPMKEVSIRGQGSLAYPGLRTQGNLETLGGPNDATRGLTSLADTFEHVIEELLDEQQVIQPSKENKDADLYSTRVMLSSQVPLEPPLLFLLEEYKNYLDAANMSMRVRRHSDPARRGELSVCDSTSEWVTAAEKKTAVDMSGATVTVLEKVPVPKGQLKQYFYETKCSSKGYAKEGCRGIDKRYWNSQCRTTQSFVRALTMDNKKRVGWRFIRIDTSC</sequence>
<accession>Q1X708</accession>
<feature type="signal peptide" evidence="2">
    <location>
        <begin position="1" status="less than"/>
        <end position="5"/>
    </location>
</feature>
<feature type="propeptide" id="PRO_0000346660" evidence="1">
    <location>
        <begin position="6"/>
        <end position="114"/>
    </location>
</feature>
<feature type="chain" id="PRO_0000346661" description="Neurotrophic factor BDNF">
    <location>
        <begin position="115"/>
        <end position="223" status="greater than"/>
    </location>
</feature>
<feature type="glycosylation site" description="N-linked (GlcNAc...) asparagine" evidence="2">
    <location>
        <position position="107"/>
    </location>
</feature>
<feature type="disulfide bond" evidence="1">
    <location>
        <begin position="127"/>
        <end position="194"/>
    </location>
</feature>
<feature type="disulfide bond" evidence="1">
    <location>
        <begin position="172"/>
        <end position="223"/>
    </location>
</feature>
<feature type="non-terminal residue">
    <location>
        <position position="1"/>
    </location>
</feature>
<feature type="non-terminal residue">
    <location>
        <position position="223"/>
    </location>
</feature>
<comment type="function">
    <text evidence="1">Promotes the survival of neuronal populations that are all located either in the central nervous system or directly connected to it.</text>
</comment>
<comment type="subcellular location">
    <subcellularLocation>
        <location evidence="1">Secreted</location>
    </subcellularLocation>
</comment>
<comment type="similarity">
    <text evidence="3">Belongs to the NGF-beta family.</text>
</comment>